<reference key="1">
    <citation type="submission" date="2003-03" db="EMBL/GenBank/DDBJ databases">
        <title>African swine fever virus genomes.</title>
        <authorList>
            <person name="Kutish G.F."/>
            <person name="Rock D.L."/>
        </authorList>
    </citation>
    <scope>NUCLEOTIDE SEQUENCE [LARGE SCALE GENOMIC DNA]</scope>
</reference>
<evidence type="ECO:0000250" key="1">
    <source>
        <dbReference type="UniProtKB" id="Q65151"/>
    </source>
</evidence>
<evidence type="ECO:0000305" key="2"/>
<sequence length="366" mass="41146">MYFLVADHREHHVIPFLKTDLQHIYQNPTQKKQIPLEIKQLFTGDYLICKSPSTILACIERKTYKDFAASLKDGRYKNRQKMLSLREQTKCQLYFFVEGPAFPNPQKKINHVAYASIITAMTHLMVRDHIFVIQTKNEAHSSQKLVQLFYAFSKEMVCVVPTSLTPTDEELCIKLWSSLSGISGVIGKILANTCSVAHLVSGQLPPQNIDQLKTPSNRPFPKKVKRMLISISKGNKELEIKLLSGVPNIGKKLAAEILKDHALLFFLNQPVECLANIQIAQKTRTIKLGMKRAEAIHYFLNWCGSARVTVDSQNITETSRPATIQATATQPAATQPLHEISNEALNEASNDASNEVTHTGHQTLFI</sequence>
<accession>P0CAF6</accession>
<organism>
    <name type="scientific">African swine fever virus (isolate Pig/Kenya/KEN-50/1950)</name>
    <name type="common">ASFV</name>
    <dbReference type="NCBI Taxonomy" id="561445"/>
    <lineage>
        <taxon>Viruses</taxon>
        <taxon>Varidnaviria</taxon>
        <taxon>Bamfordvirae</taxon>
        <taxon>Nucleocytoviricota</taxon>
        <taxon>Pokkesviricetes</taxon>
        <taxon>Asfuvirales</taxon>
        <taxon>Asfarviridae</taxon>
        <taxon>Asfivirus</taxon>
        <taxon>African swine fever virus</taxon>
    </lineage>
</organism>
<comment type="function">
    <text evidence="1">Plays a role in the inhibition of type I interferon signaling pathway. Mechanistically, specifically interacts with 2',3'-cGAMP and cleaves it via its phosphodiesterase activity. In turn, prevents 2',3'-cGAMP interaction with host ER-resident STING1 leading to inhibition of downstream signaling pathway and type I interferon production.</text>
</comment>
<comment type="induction">
    <text evidence="2">Expressed in the late phase of the viral replicative cycle.</text>
</comment>
<comment type="similarity">
    <text evidence="2">Belongs to the asfivirus EP364R family.</text>
</comment>
<dbReference type="EC" id="3.1.4.-" evidence="1"/>
<dbReference type="EMBL" id="AY261360">
    <property type="status" value="NOT_ANNOTATED_CDS"/>
    <property type="molecule type" value="Genomic_DNA"/>
</dbReference>
<dbReference type="Proteomes" id="UP000000861">
    <property type="component" value="Segment"/>
</dbReference>
<dbReference type="GO" id="GO:0048476">
    <property type="term" value="C:Holliday junction resolvase complex"/>
    <property type="evidence" value="ECO:0007669"/>
    <property type="project" value="TreeGrafter"/>
</dbReference>
<dbReference type="GO" id="GO:0048257">
    <property type="term" value="F:3'-flap endonuclease activity"/>
    <property type="evidence" value="ECO:0007669"/>
    <property type="project" value="TreeGrafter"/>
</dbReference>
<dbReference type="GO" id="GO:0008821">
    <property type="term" value="F:crossover junction DNA endonuclease activity"/>
    <property type="evidence" value="ECO:0007669"/>
    <property type="project" value="InterPro"/>
</dbReference>
<dbReference type="GO" id="GO:0003677">
    <property type="term" value="F:DNA binding"/>
    <property type="evidence" value="ECO:0007669"/>
    <property type="project" value="InterPro"/>
</dbReference>
<dbReference type="GO" id="GO:0006308">
    <property type="term" value="P:DNA catabolic process"/>
    <property type="evidence" value="ECO:0007669"/>
    <property type="project" value="InterPro"/>
</dbReference>
<dbReference type="GO" id="GO:0000727">
    <property type="term" value="P:double-strand break repair via break-induced replication"/>
    <property type="evidence" value="ECO:0007669"/>
    <property type="project" value="TreeGrafter"/>
</dbReference>
<dbReference type="GO" id="GO:0052170">
    <property type="term" value="P:symbiont-mediated suppression of host innate immune response"/>
    <property type="evidence" value="ECO:0007669"/>
    <property type="project" value="UniProtKB-KW"/>
</dbReference>
<dbReference type="GO" id="GO:0039502">
    <property type="term" value="P:symbiont-mediated suppression of host type I interferon-mediated signaling pathway"/>
    <property type="evidence" value="ECO:0007669"/>
    <property type="project" value="UniProtKB-KW"/>
</dbReference>
<dbReference type="CDD" id="cd22367">
    <property type="entry name" value="XPF_ERCC4_MUS81-like"/>
    <property type="match status" value="1"/>
</dbReference>
<dbReference type="Gene3D" id="3.40.50.10130">
    <property type="match status" value="1"/>
</dbReference>
<dbReference type="InterPro" id="IPR006166">
    <property type="entry name" value="ERCC4_domain"/>
</dbReference>
<dbReference type="InterPro" id="IPR033309">
    <property type="entry name" value="Mus81"/>
</dbReference>
<dbReference type="InterPro" id="IPR011335">
    <property type="entry name" value="Restrct_endonuc-II-like"/>
</dbReference>
<dbReference type="PANTHER" id="PTHR13451">
    <property type="entry name" value="CLASS II CROSSOVER JUNCTION ENDONUCLEASE MUS81"/>
    <property type="match status" value="1"/>
</dbReference>
<dbReference type="PANTHER" id="PTHR13451:SF0">
    <property type="entry name" value="CROSSOVER JUNCTION ENDONUCLEASE MUS81"/>
    <property type="match status" value="1"/>
</dbReference>
<dbReference type="Pfam" id="PF02732">
    <property type="entry name" value="ERCC4"/>
    <property type="match status" value="1"/>
</dbReference>
<dbReference type="SUPFAM" id="SSF52980">
    <property type="entry name" value="Restriction endonuclease-like"/>
    <property type="match status" value="1"/>
</dbReference>
<keyword id="KW-0945">Host-virus interaction</keyword>
<keyword id="KW-0378">Hydrolase</keyword>
<keyword id="KW-1090">Inhibition of host innate immune response by virus</keyword>
<keyword id="KW-1114">Inhibition of host interferon signaling pathway by virus</keyword>
<keyword id="KW-0922">Interferon antiviral system evasion</keyword>
<keyword id="KW-0426">Late protein</keyword>
<keyword id="KW-0899">Viral immunoevasion</keyword>
<organismHost>
    <name type="scientific">Ornithodoros</name>
    <name type="common">relapsing fever ticks</name>
    <dbReference type="NCBI Taxonomy" id="6937"/>
</organismHost>
<organismHost>
    <name type="scientific">Phacochoerus aethiopicus</name>
    <name type="common">Warthog</name>
    <dbReference type="NCBI Taxonomy" id="85517"/>
</organismHost>
<organismHost>
    <name type="scientific">Phacochoerus africanus</name>
    <name type="common">Warthog</name>
    <dbReference type="NCBI Taxonomy" id="41426"/>
</organismHost>
<organismHost>
    <name type="scientific">Potamochoerus larvatus</name>
    <name type="common">Bushpig</name>
    <dbReference type="NCBI Taxonomy" id="273792"/>
</organismHost>
<organismHost>
    <name type="scientific">Sus scrofa</name>
    <name type="common">Pig</name>
    <dbReference type="NCBI Taxonomy" id="9823"/>
</organismHost>
<protein>
    <recommendedName>
        <fullName>ERCC4 domain-containing protein EP364R</fullName>
        <shortName>pEP364R</shortName>
        <ecNumber evidence="1">3.1.4.-</ecNumber>
    </recommendedName>
</protein>
<name>VF364_ASFK5</name>
<gene>
    <name type="ordered locus">Ken-071</name>
</gene>
<feature type="chain" id="PRO_0000373667" description="ERCC4 domain-containing protein EP364R">
    <location>
        <begin position="1"/>
        <end position="366"/>
    </location>
</feature>
<feature type="domain" description="ERCC4">
    <location>
        <begin position="3"/>
        <end position="101"/>
    </location>
</feature>
<proteinExistence type="inferred from homology"/>